<protein>
    <recommendedName>
        <fullName>Inner membrane permease YgbN</fullName>
    </recommendedName>
</protein>
<proteinExistence type="evidence at protein level"/>
<accession>Q46892</accession>
<accession>Q2MA89</accession>
<keyword id="KW-0997">Cell inner membrane</keyword>
<keyword id="KW-1003">Cell membrane</keyword>
<keyword id="KW-0472">Membrane</keyword>
<keyword id="KW-1185">Reference proteome</keyword>
<keyword id="KW-0812">Transmembrane</keyword>
<keyword id="KW-1133">Transmembrane helix</keyword>
<keyword id="KW-0813">Transport</keyword>
<sequence length="454" mass="46770">MSTITLLCIALAGVIMLLLLVIKAKVQPFVALLLVSLLVALAAGIPAGEVGKVMIAGMGGVLGSVTIIIGLGAMLGRMIEHSGGAESLANYFSRKLGDKRTIAALTLAAFFLGIPVFFDVGFIILAPIIYGFAKVAKISPLKFGLPVAGIMLTVHVAVPPHPGPVAAAGLLHADIGWLTIIGIAISIPVGVVGYFAAKIINKRQYAMSVEVLEQMQLAPASEEGATKLSDKINPPGVALVTSLIVIPIAIIMAGTVSATLMPPSHPLLGTLQLIGSPMVALMIALVLAFWLLALRRGWSLQHTSDIMGSALPTAAVVILVTGAGGVFGKVLVESGVGKALANMLQMIDLPLLPAAFIISLALRASQGSATVAILTTGGLLSEAVMGLNPIQCVLVTLAACFGGLGASHINDSGFWIVTKYLGLSVADGLKTWTVLTTILGFTGFLITWCVWAVI</sequence>
<reference key="1">
    <citation type="journal article" date="1997" name="Science">
        <title>The complete genome sequence of Escherichia coli K-12.</title>
        <authorList>
            <person name="Blattner F.R."/>
            <person name="Plunkett G. III"/>
            <person name="Bloch C.A."/>
            <person name="Perna N.T."/>
            <person name="Burland V."/>
            <person name="Riley M."/>
            <person name="Collado-Vides J."/>
            <person name="Glasner J.D."/>
            <person name="Rode C.K."/>
            <person name="Mayhew G.F."/>
            <person name="Gregor J."/>
            <person name="Davis N.W."/>
            <person name="Kirkpatrick H.A."/>
            <person name="Goeden M.A."/>
            <person name="Rose D.J."/>
            <person name="Mau B."/>
            <person name="Shao Y."/>
        </authorList>
    </citation>
    <scope>NUCLEOTIDE SEQUENCE [LARGE SCALE GENOMIC DNA]</scope>
    <source>
        <strain>K12 / MG1655 / ATCC 47076</strain>
    </source>
</reference>
<reference key="2">
    <citation type="journal article" date="2006" name="Mol. Syst. Biol.">
        <title>Highly accurate genome sequences of Escherichia coli K-12 strains MG1655 and W3110.</title>
        <authorList>
            <person name="Hayashi K."/>
            <person name="Morooka N."/>
            <person name="Yamamoto Y."/>
            <person name="Fujita K."/>
            <person name="Isono K."/>
            <person name="Choi S."/>
            <person name="Ohtsubo E."/>
            <person name="Baba T."/>
            <person name="Wanner B.L."/>
            <person name="Mori H."/>
            <person name="Horiuchi T."/>
        </authorList>
    </citation>
    <scope>NUCLEOTIDE SEQUENCE [LARGE SCALE GENOMIC DNA]</scope>
    <source>
        <strain>K12 / W3110 / ATCC 27325 / DSM 5911</strain>
    </source>
</reference>
<reference key="3">
    <citation type="journal article" date="2005" name="Science">
        <title>Global topology analysis of the Escherichia coli inner membrane proteome.</title>
        <authorList>
            <person name="Daley D.O."/>
            <person name="Rapp M."/>
            <person name="Granseth E."/>
            <person name="Melen K."/>
            <person name="Drew D."/>
            <person name="von Heijne G."/>
        </authorList>
    </citation>
    <scope>TOPOLOGY [LARGE SCALE ANALYSIS]</scope>
    <source>
        <strain>K12 / MG1655 / ATCC 47076</strain>
    </source>
</reference>
<dbReference type="EMBL" id="U29579">
    <property type="protein sequence ID" value="AAA69250.1"/>
    <property type="molecule type" value="Genomic_DNA"/>
</dbReference>
<dbReference type="EMBL" id="U00096">
    <property type="protein sequence ID" value="AAC75782.1"/>
    <property type="molecule type" value="Genomic_DNA"/>
</dbReference>
<dbReference type="EMBL" id="AP009048">
    <property type="protein sequence ID" value="BAE76817.1"/>
    <property type="molecule type" value="Genomic_DNA"/>
</dbReference>
<dbReference type="PIR" id="H65054">
    <property type="entry name" value="H65054"/>
</dbReference>
<dbReference type="RefSeq" id="NP_417220.1">
    <property type="nucleotide sequence ID" value="NC_000913.3"/>
</dbReference>
<dbReference type="RefSeq" id="WP_000104441.1">
    <property type="nucleotide sequence ID" value="NZ_LN832404.1"/>
</dbReference>
<dbReference type="SMR" id="Q46892"/>
<dbReference type="BioGRID" id="4260990">
    <property type="interactions" value="160"/>
</dbReference>
<dbReference type="FunCoup" id="Q46892">
    <property type="interactions" value="54"/>
</dbReference>
<dbReference type="STRING" id="511145.b2740"/>
<dbReference type="TCDB" id="2.A.8.1.7">
    <property type="family name" value="the gluconate:h(+) symporter (gntp) family"/>
</dbReference>
<dbReference type="PaxDb" id="511145-b2740"/>
<dbReference type="DNASU" id="947208"/>
<dbReference type="EnsemblBacteria" id="AAC75782">
    <property type="protein sequence ID" value="AAC75782"/>
    <property type="gene ID" value="b2740"/>
</dbReference>
<dbReference type="GeneID" id="947208"/>
<dbReference type="KEGG" id="ecj:JW2710"/>
<dbReference type="KEGG" id="eco:b2740"/>
<dbReference type="KEGG" id="ecoc:C3026_15070"/>
<dbReference type="PATRIC" id="fig|1411691.4.peg.4000"/>
<dbReference type="EchoBASE" id="EB2911"/>
<dbReference type="eggNOG" id="COG2610">
    <property type="taxonomic scope" value="Bacteria"/>
</dbReference>
<dbReference type="HOGENOM" id="CLU_027949_0_2_6"/>
<dbReference type="InParanoid" id="Q46892"/>
<dbReference type="OMA" id="GWVILMG"/>
<dbReference type="OrthoDB" id="9787129at2"/>
<dbReference type="PhylomeDB" id="Q46892"/>
<dbReference type="BioCyc" id="EcoCyc:B2740-MONOMER"/>
<dbReference type="PRO" id="PR:Q46892"/>
<dbReference type="Proteomes" id="UP000000625">
    <property type="component" value="Chromosome"/>
</dbReference>
<dbReference type="GO" id="GO:0005886">
    <property type="term" value="C:plasma membrane"/>
    <property type="evidence" value="ECO:0000314"/>
    <property type="project" value="EcoCyc"/>
</dbReference>
<dbReference type="GO" id="GO:0015128">
    <property type="term" value="F:gluconate transmembrane transporter activity"/>
    <property type="evidence" value="ECO:0007669"/>
    <property type="project" value="InterPro"/>
</dbReference>
<dbReference type="InterPro" id="IPR003474">
    <property type="entry name" value="Glcn_transporter"/>
</dbReference>
<dbReference type="NCBIfam" id="TIGR00791">
    <property type="entry name" value="gntP"/>
    <property type="match status" value="1"/>
</dbReference>
<dbReference type="NCBIfam" id="NF007332">
    <property type="entry name" value="PRK09821.1"/>
    <property type="match status" value="1"/>
</dbReference>
<dbReference type="PANTHER" id="PTHR30354">
    <property type="entry name" value="GNT FAMILY GLUCONATE TRANSPORTER"/>
    <property type="match status" value="1"/>
</dbReference>
<dbReference type="PANTHER" id="PTHR30354:SF25">
    <property type="entry name" value="INNER MEMBRANE PERMEASE YGBN"/>
    <property type="match status" value="1"/>
</dbReference>
<dbReference type="Pfam" id="PF02447">
    <property type="entry name" value="GntP_permease"/>
    <property type="match status" value="1"/>
</dbReference>
<dbReference type="PIRSF" id="PIRSF002746">
    <property type="entry name" value="Gluconate_transporter"/>
    <property type="match status" value="1"/>
</dbReference>
<gene>
    <name type="primary">ygbN</name>
    <name type="ordered locus">b2740</name>
    <name type="ordered locus">JW2710</name>
</gene>
<evidence type="ECO:0000255" key="1"/>
<evidence type="ECO:0000305" key="2"/>
<comment type="subcellular location">
    <subcellularLocation>
        <location>Cell inner membrane</location>
        <topology>Multi-pass membrane protein</topology>
    </subcellularLocation>
</comment>
<comment type="similarity">
    <text evidence="2">Belongs to the GntP permease family.</text>
</comment>
<organism>
    <name type="scientific">Escherichia coli (strain K12)</name>
    <dbReference type="NCBI Taxonomy" id="83333"/>
    <lineage>
        <taxon>Bacteria</taxon>
        <taxon>Pseudomonadati</taxon>
        <taxon>Pseudomonadota</taxon>
        <taxon>Gammaproteobacteria</taxon>
        <taxon>Enterobacterales</taxon>
        <taxon>Enterobacteriaceae</taxon>
        <taxon>Escherichia</taxon>
    </lineage>
</organism>
<feature type="chain" id="PRO_0000061943" description="Inner membrane permease YgbN">
    <location>
        <begin position="1"/>
        <end position="454"/>
    </location>
</feature>
<feature type="topological domain" description="Periplasmic" evidence="1">
    <location>
        <position position="1"/>
    </location>
</feature>
<feature type="transmembrane region" description="Helical" evidence="1">
    <location>
        <begin position="2"/>
        <end position="22"/>
    </location>
</feature>
<feature type="topological domain" description="Cytoplasmic" evidence="1">
    <location>
        <begin position="23"/>
        <end position="27"/>
    </location>
</feature>
<feature type="transmembrane region" description="Helical" evidence="1">
    <location>
        <begin position="28"/>
        <end position="48"/>
    </location>
</feature>
<feature type="topological domain" description="Periplasmic" evidence="1">
    <location>
        <begin position="49"/>
        <end position="52"/>
    </location>
</feature>
<feature type="transmembrane region" description="Helical" evidence="1">
    <location>
        <begin position="53"/>
        <end position="73"/>
    </location>
</feature>
<feature type="topological domain" description="Cytoplasmic" evidence="1">
    <location>
        <begin position="74"/>
        <end position="108"/>
    </location>
</feature>
<feature type="transmembrane region" description="Helical" evidence="1">
    <location>
        <begin position="109"/>
        <end position="129"/>
    </location>
</feature>
<feature type="topological domain" description="Periplasmic" evidence="1">
    <location>
        <begin position="130"/>
        <end position="137"/>
    </location>
</feature>
<feature type="transmembrane region" description="Helical" evidence="1">
    <location>
        <begin position="138"/>
        <end position="158"/>
    </location>
</feature>
<feature type="topological domain" description="Cytoplasmic" evidence="1">
    <location>
        <begin position="159"/>
        <end position="174"/>
    </location>
</feature>
<feature type="transmembrane region" description="Helical" evidence="1">
    <location>
        <begin position="175"/>
        <end position="195"/>
    </location>
</feature>
<feature type="topological domain" description="Periplasmic" evidence="1">
    <location>
        <begin position="196"/>
        <end position="235"/>
    </location>
</feature>
<feature type="transmembrane region" description="Helical" evidence="1">
    <location>
        <begin position="236"/>
        <end position="256"/>
    </location>
</feature>
<feature type="topological domain" description="Cytoplasmic" evidence="1">
    <location>
        <begin position="257"/>
        <end position="273"/>
    </location>
</feature>
<feature type="transmembrane region" description="Helical" evidence="1">
    <location>
        <begin position="274"/>
        <end position="294"/>
    </location>
</feature>
<feature type="topological domain" description="Periplasmic" evidence="1">
    <location>
        <begin position="295"/>
        <end position="305"/>
    </location>
</feature>
<feature type="transmembrane region" description="Helical" evidence="1">
    <location>
        <begin position="306"/>
        <end position="326"/>
    </location>
</feature>
<feature type="topological domain" description="Cytoplasmic" evidence="1">
    <location>
        <begin position="327"/>
        <end position="341"/>
    </location>
</feature>
<feature type="transmembrane region" description="Helical" evidence="1">
    <location>
        <begin position="342"/>
        <end position="362"/>
    </location>
</feature>
<feature type="topological domain" description="Periplasmic" evidence="1">
    <location>
        <begin position="363"/>
        <end position="383"/>
    </location>
</feature>
<feature type="transmembrane region" description="Helical" evidence="1">
    <location>
        <begin position="384"/>
        <end position="404"/>
    </location>
</feature>
<feature type="topological domain" description="Cytoplasmic" evidence="1">
    <location>
        <begin position="405"/>
        <end position="433"/>
    </location>
</feature>
<feature type="transmembrane region" description="Helical" evidence="1">
    <location>
        <begin position="434"/>
        <end position="454"/>
    </location>
</feature>
<name>YGBN_ECOLI</name>